<protein>
    <recommendedName>
        <fullName>Actin-1</fullName>
        <ecNumber evidence="2">3.6.4.-</ecNumber>
    </recommendedName>
    <alternativeName>
        <fullName>Actin I</fullName>
    </alternativeName>
</protein>
<name>ACT1_NAEFO</name>
<feature type="propeptide" id="PRO_0000000702" description="Removed in mature form" evidence="1">
    <location>
        <begin position="1"/>
        <end position="2"/>
    </location>
</feature>
<feature type="chain" id="PRO_0000000703" description="Actin-1">
    <location>
        <begin position="3"/>
        <end position="375"/>
    </location>
</feature>
<feature type="modified residue" description="N-acetylaspartate" evidence="1">
    <location>
        <position position="3"/>
    </location>
</feature>
<feature type="sequence conflict" description="In Ref. 2; AAB42183." evidence="3" ref="2">
    <original>V</original>
    <variation>A</variation>
    <location>
        <position position="58"/>
    </location>
</feature>
<feature type="sequence conflict" description="In Ref. 2; AAB42183." evidence="3" ref="2">
    <original>T</original>
    <variation>S</variation>
    <location>
        <position position="278"/>
    </location>
</feature>
<reference key="1">
    <citation type="submission" date="1992-05" db="EMBL/GenBank/DDBJ databases">
        <title>Cloning and characterization of two virulent-related actin genes in Naegleria fowleri.</title>
        <authorList>
            <person name="Ahn J."/>
            <person name="Hu W.-N."/>
            <person name="Kopachik W.J."/>
            <person name="Band R.N."/>
        </authorList>
    </citation>
    <scope>NUCLEOTIDE SEQUENCE</scope>
    <source>
        <strain>ATCC 30894 / Lee</strain>
    </source>
</reference>
<reference key="2">
    <citation type="journal article" date="1996" name="FEMS Microbiol. Lett.">
        <title>Molecular cloning of, and phylogenetic analysis of, an actin in Naegleria fowleri.</title>
        <authorList>
            <person name="Gorospe S."/>
            <person name="Band R.N."/>
            <person name="Kopachik W.J."/>
        </authorList>
    </citation>
    <scope>NUCLEOTIDE SEQUENCE [GENOMIC DNA]</scope>
    <source>
        <strain>ATCC 30894 / Lee</strain>
    </source>
</reference>
<accession>P27131</accession>
<dbReference type="EC" id="3.6.4.-" evidence="2"/>
<dbReference type="EMBL" id="M90311">
    <property type="protein sequence ID" value="AAA29382.1"/>
    <property type="molecule type" value="mRNA"/>
</dbReference>
<dbReference type="EMBL" id="U37719">
    <property type="protein sequence ID" value="AAB42183.1"/>
    <property type="molecule type" value="Genomic_DNA"/>
</dbReference>
<dbReference type="SMR" id="P27131"/>
<dbReference type="VEuPathDB" id="AmoebaDB:FDP41_006065"/>
<dbReference type="VEuPathDB" id="AmoebaDB:NF0132150"/>
<dbReference type="VEuPathDB" id="AmoebaDB:NfTy_067420"/>
<dbReference type="GO" id="GO:0005737">
    <property type="term" value="C:cytoplasm"/>
    <property type="evidence" value="ECO:0007669"/>
    <property type="project" value="UniProtKB-KW"/>
</dbReference>
<dbReference type="GO" id="GO:0005856">
    <property type="term" value="C:cytoskeleton"/>
    <property type="evidence" value="ECO:0007669"/>
    <property type="project" value="UniProtKB-SubCell"/>
</dbReference>
<dbReference type="GO" id="GO:0005524">
    <property type="term" value="F:ATP binding"/>
    <property type="evidence" value="ECO:0007669"/>
    <property type="project" value="UniProtKB-KW"/>
</dbReference>
<dbReference type="GO" id="GO:0016787">
    <property type="term" value="F:hydrolase activity"/>
    <property type="evidence" value="ECO:0007669"/>
    <property type="project" value="UniProtKB-KW"/>
</dbReference>
<dbReference type="CDD" id="cd10224">
    <property type="entry name" value="ASKHA_NBD_actin"/>
    <property type="match status" value="1"/>
</dbReference>
<dbReference type="FunFam" id="3.30.420.40:FF:000291">
    <property type="entry name" value="Actin, alpha skeletal muscle"/>
    <property type="match status" value="1"/>
</dbReference>
<dbReference type="FunFam" id="3.90.640.10:FF:000001">
    <property type="entry name" value="Actin, muscle"/>
    <property type="match status" value="1"/>
</dbReference>
<dbReference type="FunFam" id="3.30.420.40:FF:000404">
    <property type="entry name" value="Major actin"/>
    <property type="match status" value="1"/>
</dbReference>
<dbReference type="FunFam" id="3.30.420.40:FF:000058">
    <property type="entry name" value="Putative actin-related protein 5"/>
    <property type="match status" value="1"/>
</dbReference>
<dbReference type="Gene3D" id="3.30.420.40">
    <property type="match status" value="2"/>
</dbReference>
<dbReference type="Gene3D" id="3.90.640.10">
    <property type="entry name" value="Actin, Chain A, domain 4"/>
    <property type="match status" value="1"/>
</dbReference>
<dbReference type="InterPro" id="IPR004000">
    <property type="entry name" value="Actin"/>
</dbReference>
<dbReference type="InterPro" id="IPR020902">
    <property type="entry name" value="Actin/actin-like_CS"/>
</dbReference>
<dbReference type="InterPro" id="IPR004001">
    <property type="entry name" value="Actin_CS"/>
</dbReference>
<dbReference type="InterPro" id="IPR043129">
    <property type="entry name" value="ATPase_NBD"/>
</dbReference>
<dbReference type="PANTHER" id="PTHR11937">
    <property type="entry name" value="ACTIN"/>
    <property type="match status" value="1"/>
</dbReference>
<dbReference type="Pfam" id="PF00022">
    <property type="entry name" value="Actin"/>
    <property type="match status" value="1"/>
</dbReference>
<dbReference type="PRINTS" id="PR00190">
    <property type="entry name" value="ACTIN"/>
</dbReference>
<dbReference type="SMART" id="SM00268">
    <property type="entry name" value="ACTIN"/>
    <property type="match status" value="1"/>
</dbReference>
<dbReference type="SUPFAM" id="SSF53067">
    <property type="entry name" value="Actin-like ATPase domain"/>
    <property type="match status" value="2"/>
</dbReference>
<dbReference type="PROSITE" id="PS00406">
    <property type="entry name" value="ACTINS_1"/>
    <property type="match status" value="1"/>
</dbReference>
<dbReference type="PROSITE" id="PS00432">
    <property type="entry name" value="ACTINS_2"/>
    <property type="match status" value="1"/>
</dbReference>
<dbReference type="PROSITE" id="PS01132">
    <property type="entry name" value="ACTINS_ACT_LIKE"/>
    <property type="match status" value="1"/>
</dbReference>
<sequence>MCDDVQALVVDNGSGMCKAGFAGDDAPRAVFPSIIGRPKQKSIMVGMGNKDAYVGDEVQSKRGILTLKYPIEHGIVTNWDDMEKIWHHTFYNELRVAPEEHPVLLTEAPLNPKANREKMTQIMFETFSVPAMYVAIQAVLSLYASGRTTGIVLDSGDGVSHTVPIYEGYALPHAILRLDLAGRDLTDYLMKILMERGYSFNTTAEREIVRDIKEKLCYIALDFEQEMKIAAESSSVEKSYELPDGNVITVGNERFRCPEVLFQPNFIGMEAAGVHETTFNSIGKCDIDIRKDLYGNVVLSGGTTMFEGIAERMTKELTNMAPASMKIKVVAPPERKYSVWIGGSILASLSTFQQMWITKEEYEDAGPGIVHRKSF</sequence>
<proteinExistence type="evidence at transcript level"/>
<keyword id="KW-0007">Acetylation</keyword>
<keyword id="KW-0067">ATP-binding</keyword>
<keyword id="KW-0963">Cytoplasm</keyword>
<keyword id="KW-0206">Cytoskeleton</keyword>
<keyword id="KW-0378">Hydrolase</keyword>
<keyword id="KW-0547">Nucleotide-binding</keyword>
<comment type="function">
    <text>Actins are highly conserved proteins that are involved in various types of cell motility and are ubiquitously expressed in all eukaryotic cells.</text>
</comment>
<comment type="catalytic activity">
    <reaction evidence="2">
        <text>ATP + H2O = ADP + phosphate + H(+)</text>
        <dbReference type="Rhea" id="RHEA:13065"/>
        <dbReference type="ChEBI" id="CHEBI:15377"/>
        <dbReference type="ChEBI" id="CHEBI:15378"/>
        <dbReference type="ChEBI" id="CHEBI:30616"/>
        <dbReference type="ChEBI" id="CHEBI:43474"/>
        <dbReference type="ChEBI" id="CHEBI:456216"/>
    </reaction>
</comment>
<comment type="subcellular location">
    <subcellularLocation>
        <location>Cytoplasm</location>
        <location>Cytoskeleton</location>
    </subcellularLocation>
</comment>
<comment type="similarity">
    <text evidence="3">Belongs to the actin family.</text>
</comment>
<organism>
    <name type="scientific">Naegleria fowleri</name>
    <name type="common">Brain eating amoeba</name>
    <dbReference type="NCBI Taxonomy" id="5763"/>
    <lineage>
        <taxon>Eukaryota</taxon>
        <taxon>Discoba</taxon>
        <taxon>Heterolobosea</taxon>
        <taxon>Tetramitia</taxon>
        <taxon>Eutetramitia</taxon>
        <taxon>Vahlkampfiidae</taxon>
        <taxon>Naegleria</taxon>
    </lineage>
</organism>
<evidence type="ECO:0000250" key="1"/>
<evidence type="ECO:0000250" key="2">
    <source>
        <dbReference type="UniProtKB" id="Q8I4X0"/>
    </source>
</evidence>
<evidence type="ECO:0000305" key="3"/>